<keyword id="KW-0067">ATP-binding</keyword>
<keyword id="KW-0227">DNA damage</keyword>
<keyword id="KW-0234">DNA repair</keyword>
<keyword id="KW-0238">DNA-binding</keyword>
<keyword id="KW-0269">Exonuclease</keyword>
<keyword id="KW-0347">Helicase</keyword>
<keyword id="KW-0378">Hydrolase</keyword>
<keyword id="KW-0540">Nuclease</keyword>
<keyword id="KW-0547">Nucleotide-binding</keyword>
<keyword id="KW-1185">Reference proteome</keyword>
<evidence type="ECO:0000255" key="1">
    <source>
        <dbReference type="HAMAP-Rule" id="MF_01453"/>
    </source>
</evidence>
<proteinExistence type="inferred from homology"/>
<organism>
    <name type="scientific">Oenococcus oeni (strain ATCC BAA-331 / PSU-1)</name>
    <dbReference type="NCBI Taxonomy" id="203123"/>
    <lineage>
        <taxon>Bacteria</taxon>
        <taxon>Bacillati</taxon>
        <taxon>Bacillota</taxon>
        <taxon>Bacilli</taxon>
        <taxon>Lactobacillales</taxon>
        <taxon>Lactobacillaceae</taxon>
        <taxon>Oenococcus</taxon>
    </lineage>
</organism>
<comment type="function">
    <text evidence="1">The heterodimer acts as both an ATP-dependent DNA helicase and an ATP-dependent, dual-direction single-stranded exonuclease. Recognizes the chi site generating a DNA molecule suitable for the initiation of homologous recombination. This subunit has 5' -&gt; 3' nuclease activity but not helicase activity.</text>
</comment>
<comment type="cofactor">
    <cofactor evidence="1">
        <name>Mg(2+)</name>
        <dbReference type="ChEBI" id="CHEBI:18420"/>
    </cofactor>
</comment>
<comment type="subunit">
    <text evidence="1">Heterodimer of AddA and RexB.</text>
</comment>
<comment type="miscellaneous">
    <text evidence="1">Despite having helicase-like domains, this subunit does not have helicase activity.</text>
</comment>
<comment type="similarity">
    <text evidence="1">Belongs to the helicase family. AddB/RexB type 2 subfamily.</text>
</comment>
<name>ADDB_OENOB</name>
<reference key="1">
    <citation type="journal article" date="2006" name="Proc. Natl. Acad. Sci. U.S.A.">
        <title>Comparative genomics of the lactic acid bacteria.</title>
        <authorList>
            <person name="Makarova K.S."/>
            <person name="Slesarev A."/>
            <person name="Wolf Y.I."/>
            <person name="Sorokin A."/>
            <person name="Mirkin B."/>
            <person name="Koonin E.V."/>
            <person name="Pavlov A."/>
            <person name="Pavlova N."/>
            <person name="Karamychev V."/>
            <person name="Polouchine N."/>
            <person name="Shakhova V."/>
            <person name="Grigoriev I."/>
            <person name="Lou Y."/>
            <person name="Rohksar D."/>
            <person name="Lucas S."/>
            <person name="Huang K."/>
            <person name="Goodstein D.M."/>
            <person name="Hawkins T."/>
            <person name="Plengvidhya V."/>
            <person name="Welker D."/>
            <person name="Hughes J."/>
            <person name="Goh Y."/>
            <person name="Benson A."/>
            <person name="Baldwin K."/>
            <person name="Lee J.-H."/>
            <person name="Diaz-Muniz I."/>
            <person name="Dosti B."/>
            <person name="Smeianov V."/>
            <person name="Wechter W."/>
            <person name="Barabote R."/>
            <person name="Lorca G."/>
            <person name="Altermann E."/>
            <person name="Barrangou R."/>
            <person name="Ganesan B."/>
            <person name="Xie Y."/>
            <person name="Rawsthorne H."/>
            <person name="Tamir D."/>
            <person name="Parker C."/>
            <person name="Breidt F."/>
            <person name="Broadbent J.R."/>
            <person name="Hutkins R."/>
            <person name="O'Sullivan D."/>
            <person name="Steele J."/>
            <person name="Unlu G."/>
            <person name="Saier M.H. Jr."/>
            <person name="Klaenhammer T."/>
            <person name="Richardson P."/>
            <person name="Kozyavkin S."/>
            <person name="Weimer B.C."/>
            <person name="Mills D.A."/>
        </authorList>
    </citation>
    <scope>NUCLEOTIDE SEQUENCE [LARGE SCALE GENOMIC DNA]</scope>
    <source>
        <strain>ATCC BAA-331 / PSU-1</strain>
    </source>
</reference>
<protein>
    <recommendedName>
        <fullName evidence="1">ATP-dependent helicase/deoxyribonuclease subunit B</fullName>
        <ecNumber evidence="1">3.1.-.-</ecNumber>
    </recommendedName>
    <alternativeName>
        <fullName evidence="1">ATP-dependent helicase/nuclease subunit RexB</fullName>
    </alternativeName>
</protein>
<feature type="chain" id="PRO_0000379385" description="ATP-dependent helicase/deoxyribonuclease subunit B">
    <location>
        <begin position="1"/>
        <end position="1161"/>
    </location>
</feature>
<gene>
    <name evidence="1" type="primary">rexB</name>
    <name type="ordered locus">OEOE_0308</name>
</gene>
<dbReference type="EC" id="3.1.-.-" evidence="1"/>
<dbReference type="EMBL" id="CP000411">
    <property type="protein sequence ID" value="ABJ56284.1"/>
    <property type="molecule type" value="Genomic_DNA"/>
</dbReference>
<dbReference type="RefSeq" id="WP_002823380.1">
    <property type="nucleotide sequence ID" value="NC_008528.1"/>
</dbReference>
<dbReference type="SMR" id="Q04GY8"/>
<dbReference type="STRING" id="203123.OEOE_0308"/>
<dbReference type="KEGG" id="ooe:OEOE_0308"/>
<dbReference type="PATRIC" id="fig|203123.7.peg.320"/>
<dbReference type="eggNOG" id="COG3857">
    <property type="taxonomic scope" value="Bacteria"/>
</dbReference>
<dbReference type="HOGENOM" id="CLU_007838_0_0_9"/>
<dbReference type="Proteomes" id="UP000000774">
    <property type="component" value="Chromosome"/>
</dbReference>
<dbReference type="GO" id="GO:0008409">
    <property type="term" value="F:5'-3' exonuclease activity"/>
    <property type="evidence" value="ECO:0007669"/>
    <property type="project" value="UniProtKB-UniRule"/>
</dbReference>
<dbReference type="GO" id="GO:0005524">
    <property type="term" value="F:ATP binding"/>
    <property type="evidence" value="ECO:0007669"/>
    <property type="project" value="UniProtKB-UniRule"/>
</dbReference>
<dbReference type="GO" id="GO:0003690">
    <property type="term" value="F:double-stranded DNA binding"/>
    <property type="evidence" value="ECO:0007669"/>
    <property type="project" value="UniProtKB-UniRule"/>
</dbReference>
<dbReference type="GO" id="GO:0004386">
    <property type="term" value="F:helicase activity"/>
    <property type="evidence" value="ECO:0007669"/>
    <property type="project" value="UniProtKB-KW"/>
</dbReference>
<dbReference type="GO" id="GO:0016817">
    <property type="term" value="F:hydrolase activity, acting on acid anhydrides"/>
    <property type="evidence" value="ECO:0007669"/>
    <property type="project" value="InterPro"/>
</dbReference>
<dbReference type="GO" id="GO:0000724">
    <property type="term" value="P:double-strand break repair via homologous recombination"/>
    <property type="evidence" value="ECO:0007669"/>
    <property type="project" value="UniProtKB-UniRule"/>
</dbReference>
<dbReference type="Gene3D" id="3.90.320.10">
    <property type="match status" value="1"/>
</dbReference>
<dbReference type="Gene3D" id="3.40.50.300">
    <property type="entry name" value="P-loop containing nucleotide triphosphate hydrolases"/>
    <property type="match status" value="4"/>
</dbReference>
<dbReference type="HAMAP" id="MF_01453">
    <property type="entry name" value="AddB_type2"/>
    <property type="match status" value="1"/>
</dbReference>
<dbReference type="InterPro" id="IPR049035">
    <property type="entry name" value="ADDB_N"/>
</dbReference>
<dbReference type="InterPro" id="IPR014141">
    <property type="entry name" value="DNA_helicase_suRexB"/>
</dbReference>
<dbReference type="InterPro" id="IPR027417">
    <property type="entry name" value="P-loop_NTPase"/>
</dbReference>
<dbReference type="InterPro" id="IPR011604">
    <property type="entry name" value="PDDEXK-like_dom_sf"/>
</dbReference>
<dbReference type="InterPro" id="IPR038726">
    <property type="entry name" value="PDDEXK_AddAB-type"/>
</dbReference>
<dbReference type="PANTHER" id="PTHR30591">
    <property type="entry name" value="RECBCD ENZYME SUBUNIT RECC"/>
    <property type="match status" value="1"/>
</dbReference>
<dbReference type="PANTHER" id="PTHR30591:SF1">
    <property type="entry name" value="RECBCD ENZYME SUBUNIT RECC"/>
    <property type="match status" value="1"/>
</dbReference>
<dbReference type="Pfam" id="PF21445">
    <property type="entry name" value="ADDB_N"/>
    <property type="match status" value="1"/>
</dbReference>
<dbReference type="Pfam" id="PF12705">
    <property type="entry name" value="PDDEXK_1"/>
    <property type="match status" value="1"/>
</dbReference>
<dbReference type="SUPFAM" id="SSF52540">
    <property type="entry name" value="P-loop containing nucleoside triphosphate hydrolases"/>
    <property type="match status" value="1"/>
</dbReference>
<accession>Q04GY8</accession>
<sequence length="1161" mass="133904">MTLEIVRGFADRDFRSELLERIYEKYRIDPQARFFYIVPNHIKFSAEVDVLKKFGSLLGKNDQEAQAFSRLQVYSLSRLAWALTKERDQKTIISNQSVSILVGQVLRELPIEKLNIFARSARMPGFVANVAEQLLEIWRSGLTASEILPLHQFDDRLSEKIKVLALIETKILPSLKDYSLPDDALRNFATQISKIDLKNCNFYFEGFSGFTASELSLVKALISADRKTQLGKKSEIVFSLTGEQQSDQYGEGNLFYRANQLFKNEFSSARVWIVSNIRPLSESQLNFEQSWRELETQGFTSQKRSFPQTKIVVSSDQEHEIDFVARSIRQRLVDNPKLRAKDILVLAQRLDGYKNIIPKIFDRYDLPYFLDKDTRMSDHPLASLAENLLGSSNEFAYERIMKIFRTGLLSWQLEDNFQTALDYLENYLLANNPKEKNWRQEEFQLIQISDEQDLNDDHKIDRQINALINRMRLFIIKILDDFQEKFAKVENYHQAVKTLYNWLTDQQVDQVLLNQANDGDDRGQQTWKLLLSTLDEVDQLIGDKKYSQKDFLQILKDGFAAASFSGIPASLDQITVSESGIVQRNDFKALYFIDASDASLPAQTNSSSLIDDFDRLQLIDDFSKAQKPYYLQDTSRQEMTAENFRFYSSVLSATDSVTFSYSKLRLDGKQNELSPYLRRLSLKNVSDLKIEKIPDLPQSQADLVDYLGTANSSAAILSQTAQNFGEDFIDGLTDLLIKRNPYFQRILQALHYNNQPVTLRPELIKKLFGEDLRLSISQIEKYYSNPYEYFLQYGLRLKKRNQFTVDAALSGTYYHSIFEQVINRLIGKRTDFHDLSDQELKKLSQESAQNLIELPDFQILQSDDHFRAVARSLTDDVLLTLKLMHRANRLNNSRPIKTEAVFGKLSSDQQREQSLSGLDFTLANGRKIYLRGKVDRIDQQDLEHIFGTIIDYKSNGKVFDFRDAYVGTELQLLTYWLALSKNSSRIGINQPGGAVFVQIRNKPADISQALAHQIQLDQLIGDRAKQQVPDFQFHGILLDDQNYLANLQTVLAGQKAKYYNFGLTKKGQKTARSDLVSKEDLTVLLKHDEKKLVEAGNKIIHGEFPLYPIKKNEQRSALTYSDYTEIMNFDRNFGNQYNNLTRYPKNKSELISKMREEEGEN</sequence>